<name>LEUD_LISMH</name>
<keyword id="KW-0028">Amino-acid biosynthesis</keyword>
<keyword id="KW-0100">Branched-chain amino acid biosynthesis</keyword>
<keyword id="KW-0432">Leucine biosynthesis</keyword>
<keyword id="KW-0456">Lyase</keyword>
<evidence type="ECO:0000255" key="1">
    <source>
        <dbReference type="HAMAP-Rule" id="MF_01031"/>
    </source>
</evidence>
<accession>B8DBU1</accession>
<organism>
    <name type="scientific">Listeria monocytogenes serotype 4a (strain HCC23)</name>
    <dbReference type="NCBI Taxonomy" id="552536"/>
    <lineage>
        <taxon>Bacteria</taxon>
        <taxon>Bacillati</taxon>
        <taxon>Bacillota</taxon>
        <taxon>Bacilli</taxon>
        <taxon>Bacillales</taxon>
        <taxon>Listeriaceae</taxon>
        <taxon>Listeria</taxon>
    </lineage>
</organism>
<comment type="function">
    <text evidence="1">Catalyzes the isomerization between 2-isopropylmalate and 3-isopropylmalate, via the formation of 2-isopropylmaleate.</text>
</comment>
<comment type="catalytic activity">
    <reaction evidence="1">
        <text>(2R,3S)-3-isopropylmalate = (2S)-2-isopropylmalate</text>
        <dbReference type="Rhea" id="RHEA:32287"/>
        <dbReference type="ChEBI" id="CHEBI:1178"/>
        <dbReference type="ChEBI" id="CHEBI:35121"/>
        <dbReference type="EC" id="4.2.1.33"/>
    </reaction>
</comment>
<comment type="pathway">
    <text evidence="1">Amino-acid biosynthesis; L-leucine biosynthesis; L-leucine from 3-methyl-2-oxobutanoate: step 2/4.</text>
</comment>
<comment type="subunit">
    <text evidence="1">Heterodimer of LeuC and LeuD.</text>
</comment>
<comment type="similarity">
    <text evidence="1">Belongs to the LeuD family. LeuD type 1 subfamily.</text>
</comment>
<reference key="1">
    <citation type="journal article" date="2011" name="J. Bacteriol.">
        <title>Genome sequence of lineage III Listeria monocytogenes strain HCC23.</title>
        <authorList>
            <person name="Steele C.L."/>
            <person name="Donaldson J.R."/>
            <person name="Paul D."/>
            <person name="Banes M.M."/>
            <person name="Arick T."/>
            <person name="Bridges S.M."/>
            <person name="Lawrence M.L."/>
        </authorList>
    </citation>
    <scope>NUCLEOTIDE SEQUENCE [LARGE SCALE GENOMIC DNA]</scope>
    <source>
        <strain>HCC23</strain>
    </source>
</reference>
<feature type="chain" id="PRO_1000149417" description="3-isopropylmalate dehydratase small subunit">
    <location>
        <begin position="1"/>
        <end position="193"/>
    </location>
</feature>
<proteinExistence type="inferred from homology"/>
<dbReference type="EC" id="4.2.1.33" evidence="1"/>
<dbReference type="EMBL" id="CP001175">
    <property type="protein sequence ID" value="ACK38927.1"/>
    <property type="molecule type" value="Genomic_DNA"/>
</dbReference>
<dbReference type="RefSeq" id="WP_003727975.1">
    <property type="nucleotide sequence ID" value="NC_011660.1"/>
</dbReference>
<dbReference type="SMR" id="B8DBU1"/>
<dbReference type="KEGG" id="lmh:LMHCC_0570"/>
<dbReference type="HOGENOM" id="CLU_081378_0_3_9"/>
<dbReference type="UniPathway" id="UPA00048">
    <property type="reaction ID" value="UER00071"/>
</dbReference>
<dbReference type="GO" id="GO:0009316">
    <property type="term" value="C:3-isopropylmalate dehydratase complex"/>
    <property type="evidence" value="ECO:0007669"/>
    <property type="project" value="InterPro"/>
</dbReference>
<dbReference type="GO" id="GO:0003861">
    <property type="term" value="F:3-isopropylmalate dehydratase activity"/>
    <property type="evidence" value="ECO:0007669"/>
    <property type="project" value="UniProtKB-UniRule"/>
</dbReference>
<dbReference type="GO" id="GO:0009098">
    <property type="term" value="P:L-leucine biosynthetic process"/>
    <property type="evidence" value="ECO:0007669"/>
    <property type="project" value="UniProtKB-UniRule"/>
</dbReference>
<dbReference type="CDD" id="cd01577">
    <property type="entry name" value="IPMI_Swivel"/>
    <property type="match status" value="1"/>
</dbReference>
<dbReference type="FunFam" id="3.20.19.10:FF:000003">
    <property type="entry name" value="3-isopropylmalate dehydratase small subunit"/>
    <property type="match status" value="1"/>
</dbReference>
<dbReference type="Gene3D" id="3.20.19.10">
    <property type="entry name" value="Aconitase, domain 4"/>
    <property type="match status" value="1"/>
</dbReference>
<dbReference type="HAMAP" id="MF_01031">
    <property type="entry name" value="LeuD_type1"/>
    <property type="match status" value="1"/>
</dbReference>
<dbReference type="InterPro" id="IPR004431">
    <property type="entry name" value="3-IsopropMal_deHydase_ssu"/>
</dbReference>
<dbReference type="InterPro" id="IPR015928">
    <property type="entry name" value="Aconitase/3IPM_dehydase_swvl"/>
</dbReference>
<dbReference type="InterPro" id="IPR000573">
    <property type="entry name" value="AconitaseA/IPMdHydase_ssu_swvl"/>
</dbReference>
<dbReference type="InterPro" id="IPR033940">
    <property type="entry name" value="IPMI_Swivel"/>
</dbReference>
<dbReference type="InterPro" id="IPR050075">
    <property type="entry name" value="LeuD"/>
</dbReference>
<dbReference type="NCBIfam" id="TIGR00171">
    <property type="entry name" value="leuD"/>
    <property type="match status" value="1"/>
</dbReference>
<dbReference type="NCBIfam" id="NF002458">
    <property type="entry name" value="PRK01641.1"/>
    <property type="match status" value="1"/>
</dbReference>
<dbReference type="PANTHER" id="PTHR43345:SF5">
    <property type="entry name" value="3-ISOPROPYLMALATE DEHYDRATASE SMALL SUBUNIT"/>
    <property type="match status" value="1"/>
</dbReference>
<dbReference type="PANTHER" id="PTHR43345">
    <property type="entry name" value="3-ISOPROPYLMALATE DEHYDRATASE SMALL SUBUNIT 2-RELATED-RELATED"/>
    <property type="match status" value="1"/>
</dbReference>
<dbReference type="Pfam" id="PF00694">
    <property type="entry name" value="Aconitase_C"/>
    <property type="match status" value="1"/>
</dbReference>
<dbReference type="SUPFAM" id="SSF52016">
    <property type="entry name" value="LeuD/IlvD-like"/>
    <property type="match status" value="1"/>
</dbReference>
<sequence>MEEIKVHIGKTVALMNDNIDTDQIIPKSFLKRIERTGFGEFLFDSWRYLPNRKPNPDFPLNAPDRQEATILITGDNFGCGSSREHAAWALLDYRFRVIIAGSYSDIFYMNCTKNGVLPIVLPREAREKLAKIAADENVTIDLPNQQVISSVGTYPFEIDATWKNKFINGLDDIAITFEHIDAIKAYEQKVDSI</sequence>
<protein>
    <recommendedName>
        <fullName evidence="1">3-isopropylmalate dehydratase small subunit</fullName>
        <ecNumber evidence="1">4.2.1.33</ecNumber>
    </recommendedName>
    <alternativeName>
        <fullName evidence="1">Alpha-IPM isomerase</fullName>
        <shortName evidence="1">IPMI</shortName>
    </alternativeName>
    <alternativeName>
        <fullName evidence="1">Isopropylmalate isomerase</fullName>
    </alternativeName>
</protein>
<gene>
    <name evidence="1" type="primary">leuD</name>
    <name type="ordered locus">LMHCC_0570</name>
</gene>